<name>NAC_META3</name>
<gene>
    <name evidence="1" type="primary">nac</name>
    <name type="ordered locus">Maeo_0895</name>
</gene>
<proteinExistence type="inferred from homology"/>
<accession>A6UVF4</accession>
<feature type="chain" id="PRO_1000083766" description="Nascent polypeptide-associated complex protein">
    <location>
        <begin position="1"/>
        <end position="130"/>
    </location>
</feature>
<feature type="domain" description="NAC-A/B" evidence="1">
    <location>
        <begin position="8"/>
        <end position="75"/>
    </location>
</feature>
<evidence type="ECO:0000255" key="1">
    <source>
        <dbReference type="HAMAP-Rule" id="MF_00814"/>
    </source>
</evidence>
<comment type="function">
    <text evidence="1">Contacts the emerging nascent chain on the ribosome.</text>
</comment>
<comment type="subunit">
    <text evidence="1">Homodimer. Interacts with the ribosome. Binds ribosomal RNA.</text>
</comment>
<comment type="similarity">
    <text evidence="1">Belongs to the NAC-alpha family.</text>
</comment>
<sequence length="130" mass="15051">MFPGRMNPKMMRQMQKMMSDMGMDSKDIKVLKITMELEDKIMVFEKPKVQVMDVMGNKTYTITGRAKNIKKDDIKAEQKEQIKDEEVKLDITKEDIEMVVNQCEVSEEEAKKVLEECNGDIAEAILKLSQ</sequence>
<organism>
    <name type="scientific">Methanococcus aeolicus (strain ATCC BAA-1280 / DSM 17508 / OCM 812 / Nankai-3)</name>
    <dbReference type="NCBI Taxonomy" id="419665"/>
    <lineage>
        <taxon>Archaea</taxon>
        <taxon>Methanobacteriati</taxon>
        <taxon>Methanobacteriota</taxon>
        <taxon>Methanomada group</taxon>
        <taxon>Methanococci</taxon>
        <taxon>Methanococcales</taxon>
        <taxon>Methanococcaceae</taxon>
        <taxon>Methanococcus</taxon>
    </lineage>
</organism>
<keyword id="KW-0653">Protein transport</keyword>
<keyword id="KW-0694">RNA-binding</keyword>
<keyword id="KW-0813">Transport</keyword>
<protein>
    <recommendedName>
        <fullName evidence="1">Nascent polypeptide-associated complex protein</fullName>
    </recommendedName>
</protein>
<dbReference type="EMBL" id="CP000743">
    <property type="protein sequence ID" value="ABR56476.1"/>
    <property type="molecule type" value="Genomic_DNA"/>
</dbReference>
<dbReference type="RefSeq" id="WP_011973608.1">
    <property type="nucleotide sequence ID" value="NC_009635.1"/>
</dbReference>
<dbReference type="SMR" id="A6UVF4"/>
<dbReference type="STRING" id="419665.Maeo_0895"/>
<dbReference type="GeneID" id="5326700"/>
<dbReference type="KEGG" id="mae:Maeo_0895"/>
<dbReference type="eggNOG" id="arCOG04061">
    <property type="taxonomic scope" value="Archaea"/>
</dbReference>
<dbReference type="HOGENOM" id="CLU_146475_1_0_2"/>
<dbReference type="OrthoDB" id="53273at2157"/>
<dbReference type="Proteomes" id="UP000001106">
    <property type="component" value="Chromosome"/>
</dbReference>
<dbReference type="GO" id="GO:0003723">
    <property type="term" value="F:RNA binding"/>
    <property type="evidence" value="ECO:0007669"/>
    <property type="project" value="UniProtKB-UniRule"/>
</dbReference>
<dbReference type="GO" id="GO:0015031">
    <property type="term" value="P:protein transport"/>
    <property type="evidence" value="ECO:0007669"/>
    <property type="project" value="UniProtKB-UniRule"/>
</dbReference>
<dbReference type="CDD" id="cd14359">
    <property type="entry name" value="UBA_AeNAC"/>
    <property type="match status" value="1"/>
</dbReference>
<dbReference type="Gene3D" id="1.10.8.10">
    <property type="entry name" value="DNA helicase RuvA subunit, C-terminal domain"/>
    <property type="match status" value="1"/>
</dbReference>
<dbReference type="Gene3D" id="2.20.70.30">
    <property type="entry name" value="Nascent polypeptide-associated complex domain"/>
    <property type="match status" value="1"/>
</dbReference>
<dbReference type="HAMAP" id="MF_00814">
    <property type="entry name" value="NAC_arch"/>
    <property type="match status" value="1"/>
</dbReference>
<dbReference type="InterPro" id="IPR044034">
    <property type="entry name" value="NAC-like_UBA"/>
</dbReference>
<dbReference type="InterPro" id="IPR038187">
    <property type="entry name" value="NAC_A/B_dom_sf"/>
</dbReference>
<dbReference type="InterPro" id="IPR005231">
    <property type="entry name" value="NAC_arc"/>
</dbReference>
<dbReference type="InterPro" id="IPR002715">
    <property type="entry name" value="Nas_poly-pep-assoc_cplx_dom"/>
</dbReference>
<dbReference type="InterPro" id="IPR009060">
    <property type="entry name" value="UBA-like_sf"/>
</dbReference>
<dbReference type="NCBIfam" id="TIGR00264">
    <property type="entry name" value="archaeal-type nascent polypeptide-associated complex protein"/>
    <property type="match status" value="1"/>
</dbReference>
<dbReference type="Pfam" id="PF01849">
    <property type="entry name" value="NAC"/>
    <property type="match status" value="1"/>
</dbReference>
<dbReference type="Pfam" id="PF19026">
    <property type="entry name" value="UBA_HYPK"/>
    <property type="match status" value="1"/>
</dbReference>
<dbReference type="SMART" id="SM01407">
    <property type="entry name" value="NAC"/>
    <property type="match status" value="1"/>
</dbReference>
<dbReference type="SUPFAM" id="SSF46934">
    <property type="entry name" value="UBA-like"/>
    <property type="match status" value="1"/>
</dbReference>
<dbReference type="PROSITE" id="PS51151">
    <property type="entry name" value="NAC_AB"/>
    <property type="match status" value="1"/>
</dbReference>
<reference key="1">
    <citation type="submission" date="2007-06" db="EMBL/GenBank/DDBJ databases">
        <title>Complete sequence of Methanococcus aeolicus Nankai-3.</title>
        <authorList>
            <consortium name="US DOE Joint Genome Institute"/>
            <person name="Copeland A."/>
            <person name="Lucas S."/>
            <person name="Lapidus A."/>
            <person name="Barry K."/>
            <person name="Glavina del Rio T."/>
            <person name="Dalin E."/>
            <person name="Tice H."/>
            <person name="Pitluck S."/>
            <person name="Chain P."/>
            <person name="Malfatti S."/>
            <person name="Shin M."/>
            <person name="Vergez L."/>
            <person name="Schmutz J."/>
            <person name="Larimer F."/>
            <person name="Land M."/>
            <person name="Hauser L."/>
            <person name="Kyrpides N."/>
            <person name="Lykidis A."/>
            <person name="Sieprawska-Lupa M."/>
            <person name="Whitman W.B."/>
            <person name="Richardson P."/>
        </authorList>
    </citation>
    <scope>NUCLEOTIDE SEQUENCE [LARGE SCALE GENOMIC DNA]</scope>
    <source>
        <strain>ATCC BAA-1280 / DSM 17508 / OCM 812 / Nankai-3</strain>
    </source>
</reference>